<keyword id="KW-0007">Acetylation</keyword>
<keyword id="KW-0148">Chlorophyll</keyword>
<keyword id="KW-0150">Chloroplast</keyword>
<keyword id="KW-0157">Chromophore</keyword>
<keyword id="KW-0249">Electron transport</keyword>
<keyword id="KW-0408">Iron</keyword>
<keyword id="KW-0460">Magnesium</keyword>
<keyword id="KW-0472">Membrane</keyword>
<keyword id="KW-0479">Metal-binding</keyword>
<keyword id="KW-0560">Oxidoreductase</keyword>
<keyword id="KW-0597">Phosphoprotein</keyword>
<keyword id="KW-0602">Photosynthesis</keyword>
<keyword id="KW-0604">Photosystem II</keyword>
<keyword id="KW-0934">Plastid</keyword>
<keyword id="KW-0793">Thylakoid</keyword>
<keyword id="KW-0812">Transmembrane</keyword>
<keyword id="KW-1133">Transmembrane helix</keyword>
<keyword id="KW-0813">Transport</keyword>
<evidence type="ECO:0000250" key="1">
    <source>
        <dbReference type="UniProtKB" id="P56761"/>
    </source>
</evidence>
<evidence type="ECO:0000255" key="2">
    <source>
        <dbReference type="HAMAP-Rule" id="MF_01383"/>
    </source>
</evidence>
<sequence length="353" mass="39606">MTIALGRFTKEENDLFDIMDDWLRRDRFVFVGWSGLLLFPCAYFALGGWFTGTTFVTSWYTHGLASSYLEGCNFLTAAVSTPANSLAHSLLLLWGPEAQGDFTRWCQLGGLWTFVALHGAFGLIGFMLRQFELARSVQLRPYNAIAFSAPIAVFVSVFLIYPLGQSGWFFAPSFGVAAIFRFILFFQGFHNWTLNPFHMMGVAGVLGAALLCAIHGATVENTLFEDGDGANTFRAFNPTQAEETYSMVTANRFWSQIFGVAFSNKRWLHFFMLFVPVTGLWMSAIGVVGLALNLRAYDFVSQEIRAAEDPEFETFYTKNILLNEGIRAWMAAQDQPHENLIFPEEVLPRGNAL</sequence>
<geneLocation type="chloroplast"/>
<comment type="function">
    <text evidence="2">Photosystem II (PSII) is a light-driven water:plastoquinone oxidoreductase that uses light energy to abstract electrons from H(2)O, generating O(2) and a proton gradient subsequently used for ATP formation. It consists of a core antenna complex that captures photons, and an electron transfer chain that converts photonic excitation into a charge separation. The D1/D2 (PsbA/PsbD) reaction center heterodimer binds P680, the primary electron donor of PSII as well as several subsequent electron acceptors. D2 is needed for assembly of a stable PSII complex.</text>
</comment>
<comment type="catalytic activity">
    <reaction evidence="2">
        <text>2 a plastoquinone + 4 hnu + 2 H2O = 2 a plastoquinol + O2</text>
        <dbReference type="Rhea" id="RHEA:36359"/>
        <dbReference type="Rhea" id="RHEA-COMP:9561"/>
        <dbReference type="Rhea" id="RHEA-COMP:9562"/>
        <dbReference type="ChEBI" id="CHEBI:15377"/>
        <dbReference type="ChEBI" id="CHEBI:15379"/>
        <dbReference type="ChEBI" id="CHEBI:17757"/>
        <dbReference type="ChEBI" id="CHEBI:30212"/>
        <dbReference type="ChEBI" id="CHEBI:62192"/>
        <dbReference type="EC" id="1.10.3.9"/>
    </reaction>
</comment>
<comment type="cofactor">
    <text evidence="2">The D1/D2 heterodimer binds P680, chlorophylls that are the primary electron donor of PSII, and subsequent electron acceptors. It shares a non-heme iron and each subunit binds pheophytin, quinone, additional chlorophylls, carotenoids and lipids. There is also a Cl(-1) ion associated with D1 and D2, which is required for oxygen evolution. The PSII complex binds additional chlorophylls, carotenoids and specific lipids.</text>
</comment>
<comment type="subunit">
    <text evidence="2">PSII is composed of 1 copy each of membrane proteins PsbA, PsbB, PsbC, PsbD, PsbE, PsbF, PsbH, PsbI, PsbJ, PsbK, PsbL, PsbM, PsbT, PsbX, PsbY, PsbZ, Psb30/Ycf12, at least 3 peripheral proteins of the oxygen-evolving complex and a large number of cofactors. It forms dimeric complexes.</text>
</comment>
<comment type="subcellular location">
    <subcellularLocation>
        <location evidence="2">Plastid</location>
        <location evidence="2">Chloroplast thylakoid membrane</location>
        <topology evidence="2">Multi-pass membrane protein</topology>
    </subcellularLocation>
</comment>
<comment type="miscellaneous">
    <text evidence="2">2 of the reaction center chlorophylls (ChlD1 and ChlD2) are entirely coordinated by water.</text>
</comment>
<comment type="similarity">
    <text evidence="2">Belongs to the reaction center PufL/M/PsbA/D family.</text>
</comment>
<protein>
    <recommendedName>
        <fullName evidence="2">Photosystem II D2 protein</fullName>
        <shortName evidence="2">PSII D2 protein</shortName>
        <ecNumber evidence="2">1.10.3.9</ecNumber>
    </recommendedName>
    <alternativeName>
        <fullName evidence="2">Photosystem Q(A) protein</fullName>
    </alternativeName>
</protein>
<dbReference type="EC" id="1.10.3.9" evidence="2"/>
<dbReference type="EMBL" id="DQ899947">
    <property type="protein sequence ID" value="ABI32504.1"/>
    <property type="molecule type" value="Genomic_DNA"/>
</dbReference>
<dbReference type="RefSeq" id="YP_740197.1">
    <property type="nucleotide sequence ID" value="NC_008326.1"/>
</dbReference>
<dbReference type="SMR" id="Q0G9M4"/>
<dbReference type="GeneID" id="4266610"/>
<dbReference type="GO" id="GO:0009535">
    <property type="term" value="C:chloroplast thylakoid membrane"/>
    <property type="evidence" value="ECO:0007669"/>
    <property type="project" value="UniProtKB-SubCell"/>
</dbReference>
<dbReference type="GO" id="GO:0009523">
    <property type="term" value="C:photosystem II"/>
    <property type="evidence" value="ECO:0007669"/>
    <property type="project" value="UniProtKB-KW"/>
</dbReference>
<dbReference type="GO" id="GO:0016168">
    <property type="term" value="F:chlorophyll binding"/>
    <property type="evidence" value="ECO:0007669"/>
    <property type="project" value="UniProtKB-UniRule"/>
</dbReference>
<dbReference type="GO" id="GO:0045156">
    <property type="term" value="F:electron transporter, transferring electrons within the cyclic electron transport pathway of photosynthesis activity"/>
    <property type="evidence" value="ECO:0007669"/>
    <property type="project" value="InterPro"/>
</dbReference>
<dbReference type="GO" id="GO:0005506">
    <property type="term" value="F:iron ion binding"/>
    <property type="evidence" value="ECO:0007669"/>
    <property type="project" value="UniProtKB-UniRule"/>
</dbReference>
<dbReference type="GO" id="GO:0010242">
    <property type="term" value="F:oxygen evolving activity"/>
    <property type="evidence" value="ECO:0007669"/>
    <property type="project" value="UniProtKB-EC"/>
</dbReference>
<dbReference type="GO" id="GO:0009772">
    <property type="term" value="P:photosynthetic electron transport in photosystem II"/>
    <property type="evidence" value="ECO:0007669"/>
    <property type="project" value="InterPro"/>
</dbReference>
<dbReference type="CDD" id="cd09288">
    <property type="entry name" value="Photosystem-II_D2"/>
    <property type="match status" value="1"/>
</dbReference>
<dbReference type="FunFam" id="1.20.85.10:FF:000001">
    <property type="entry name" value="photosystem II D2 protein-like"/>
    <property type="match status" value="1"/>
</dbReference>
<dbReference type="Gene3D" id="1.20.85.10">
    <property type="entry name" value="Photosystem II protein D1-like"/>
    <property type="match status" value="1"/>
</dbReference>
<dbReference type="HAMAP" id="MF_01383">
    <property type="entry name" value="PSII_PsbD_D2"/>
    <property type="match status" value="1"/>
</dbReference>
<dbReference type="InterPro" id="IPR055266">
    <property type="entry name" value="D1/D2"/>
</dbReference>
<dbReference type="InterPro" id="IPR036854">
    <property type="entry name" value="Photo_II_D1/D2_sf"/>
</dbReference>
<dbReference type="InterPro" id="IPR000484">
    <property type="entry name" value="Photo_RC_L/M"/>
</dbReference>
<dbReference type="InterPro" id="IPR055265">
    <property type="entry name" value="Photo_RC_L/M_CS"/>
</dbReference>
<dbReference type="InterPro" id="IPR005868">
    <property type="entry name" value="PSII_PsbD/D2"/>
</dbReference>
<dbReference type="NCBIfam" id="TIGR01152">
    <property type="entry name" value="psbD"/>
    <property type="match status" value="1"/>
</dbReference>
<dbReference type="PANTHER" id="PTHR33149:SF12">
    <property type="entry name" value="PHOTOSYSTEM II D2 PROTEIN"/>
    <property type="match status" value="1"/>
</dbReference>
<dbReference type="PANTHER" id="PTHR33149">
    <property type="entry name" value="PHOTOSYSTEM II PROTEIN D1"/>
    <property type="match status" value="1"/>
</dbReference>
<dbReference type="Pfam" id="PF00124">
    <property type="entry name" value="Photo_RC"/>
    <property type="match status" value="1"/>
</dbReference>
<dbReference type="PRINTS" id="PR00256">
    <property type="entry name" value="REACTNCENTRE"/>
</dbReference>
<dbReference type="SUPFAM" id="SSF81483">
    <property type="entry name" value="Bacterial photosystem II reaction centre, L and M subunits"/>
    <property type="match status" value="1"/>
</dbReference>
<dbReference type="PROSITE" id="PS00244">
    <property type="entry name" value="REACTION_CENTER"/>
    <property type="match status" value="1"/>
</dbReference>
<gene>
    <name evidence="2" type="primary">psbD</name>
</gene>
<name>PSBD_LIRTU</name>
<accession>Q0G9M4</accession>
<reference key="1">
    <citation type="journal article" date="2006" name="BMC Evol. Biol.">
        <title>Complete plastid genome sequences of Drimys, Liriodendron, and Piper: implications for the phylogenetic relationships of magnoliids.</title>
        <authorList>
            <person name="Cai Z."/>
            <person name="Penaflor C."/>
            <person name="Kuehl J.V."/>
            <person name="Leebens-Mack J."/>
            <person name="Carlson J.E."/>
            <person name="dePamphilis C.W."/>
            <person name="Boore J.L."/>
            <person name="Jansen R.K."/>
        </authorList>
    </citation>
    <scope>NUCLEOTIDE SEQUENCE [LARGE SCALE GENOMIC DNA]</scope>
</reference>
<feature type="initiator methionine" description="Removed" evidence="1">
    <location>
        <position position="1"/>
    </location>
</feature>
<feature type="chain" id="PRO_0000359664" description="Photosystem II D2 protein">
    <location>
        <begin position="2"/>
        <end position="353"/>
    </location>
</feature>
<feature type="transmembrane region" description="Helical" evidence="2">
    <location>
        <begin position="41"/>
        <end position="61"/>
    </location>
</feature>
<feature type="transmembrane region" description="Helical" evidence="2">
    <location>
        <begin position="125"/>
        <end position="141"/>
    </location>
</feature>
<feature type="transmembrane region" description="Helical" evidence="2">
    <location>
        <begin position="153"/>
        <end position="166"/>
    </location>
</feature>
<feature type="transmembrane region" description="Helical" evidence="2">
    <location>
        <begin position="208"/>
        <end position="228"/>
    </location>
</feature>
<feature type="transmembrane region" description="Helical" evidence="2">
    <location>
        <begin position="279"/>
        <end position="295"/>
    </location>
</feature>
<feature type="binding site" description="axial binding residue" evidence="2">
    <location>
        <position position="118"/>
    </location>
    <ligand>
        <name>chlorophyll a</name>
        <dbReference type="ChEBI" id="CHEBI:58416"/>
        <label>ChlzD2</label>
    </ligand>
    <ligandPart>
        <name>Mg</name>
        <dbReference type="ChEBI" id="CHEBI:25107"/>
    </ligandPart>
</feature>
<feature type="binding site" evidence="2">
    <location>
        <position position="130"/>
    </location>
    <ligand>
        <name>pheophytin a</name>
        <dbReference type="ChEBI" id="CHEBI:136840"/>
        <label>D2</label>
    </ligand>
</feature>
<feature type="binding site" evidence="2">
    <location>
        <position position="143"/>
    </location>
    <ligand>
        <name>pheophytin a</name>
        <dbReference type="ChEBI" id="CHEBI:136840"/>
        <label>D2</label>
    </ligand>
</feature>
<feature type="binding site" description="axial binding residue" evidence="2">
    <location>
        <position position="198"/>
    </location>
    <ligand>
        <name>chlorophyll a</name>
        <dbReference type="ChEBI" id="CHEBI:58416"/>
        <label>PD2</label>
    </ligand>
    <ligandPart>
        <name>Mg</name>
        <dbReference type="ChEBI" id="CHEBI:25107"/>
    </ligandPart>
</feature>
<feature type="binding site" evidence="2">
    <location>
        <position position="215"/>
    </location>
    <ligand>
        <name>a plastoquinone</name>
        <dbReference type="ChEBI" id="CHEBI:17757"/>
        <label>Q(A)</label>
    </ligand>
</feature>
<feature type="binding site" evidence="2">
    <location>
        <position position="215"/>
    </location>
    <ligand>
        <name>Fe cation</name>
        <dbReference type="ChEBI" id="CHEBI:24875"/>
        <note>ligand shared with heterodimeric partner</note>
    </ligand>
</feature>
<feature type="binding site" evidence="2">
    <location>
        <position position="262"/>
    </location>
    <ligand>
        <name>a plastoquinone</name>
        <dbReference type="ChEBI" id="CHEBI:17757"/>
        <label>Q(A)</label>
    </ligand>
</feature>
<feature type="binding site" evidence="2">
    <location>
        <position position="269"/>
    </location>
    <ligand>
        <name>Fe cation</name>
        <dbReference type="ChEBI" id="CHEBI:24875"/>
        <note>ligand shared with heterodimeric partner</note>
    </ligand>
</feature>
<feature type="modified residue" description="N-acetylthreonine" evidence="1">
    <location>
        <position position="2"/>
    </location>
</feature>
<feature type="modified residue" description="Phosphothreonine" evidence="1">
    <location>
        <position position="2"/>
    </location>
</feature>
<proteinExistence type="inferred from homology"/>
<organism>
    <name type="scientific">Liriodendron tulipifera</name>
    <name type="common">Tuliptree</name>
    <name type="synonym">Tulip poplar</name>
    <dbReference type="NCBI Taxonomy" id="3415"/>
    <lineage>
        <taxon>Eukaryota</taxon>
        <taxon>Viridiplantae</taxon>
        <taxon>Streptophyta</taxon>
        <taxon>Embryophyta</taxon>
        <taxon>Tracheophyta</taxon>
        <taxon>Spermatophyta</taxon>
        <taxon>Magnoliopsida</taxon>
        <taxon>Magnoliidae</taxon>
        <taxon>Magnoliales</taxon>
        <taxon>Magnoliaceae</taxon>
        <taxon>Liriodendron</taxon>
    </lineage>
</organism>